<accession>Q931E9</accession>
<accession>Q99RD7</accession>
<evidence type="ECO:0000255" key="1"/>
<evidence type="ECO:0000255" key="2">
    <source>
        <dbReference type="PROSITE-ProRule" id="PRU00437"/>
    </source>
</evidence>
<evidence type="ECO:0000255" key="3">
    <source>
        <dbReference type="PROSITE-ProRule" id="PRU00477"/>
    </source>
</evidence>
<evidence type="ECO:0000256" key="4">
    <source>
        <dbReference type="SAM" id="MobiDB-lite"/>
    </source>
</evidence>
<evidence type="ECO:0000305" key="5"/>
<dbReference type="EMBL" id="BA000017">
    <property type="protein sequence ID" value="BAB58658.2"/>
    <property type="status" value="ALT_INIT"/>
    <property type="molecule type" value="Genomic_DNA"/>
</dbReference>
<dbReference type="EMBL" id="BA000017">
    <property type="protein sequence ID" value="BAB58659.1"/>
    <property type="status" value="ALT_FRAME"/>
    <property type="molecule type" value="Genomic_DNA"/>
</dbReference>
<dbReference type="SMR" id="Q931E9"/>
<dbReference type="KEGG" id="sav:SAV2496"/>
<dbReference type="KEGG" id="sav:SAV2497"/>
<dbReference type="HOGENOM" id="CLU_115201_0_0_9"/>
<dbReference type="Proteomes" id="UP000002481">
    <property type="component" value="Chromosome"/>
</dbReference>
<dbReference type="GO" id="GO:0005576">
    <property type="term" value="C:extracellular region"/>
    <property type="evidence" value="ECO:0007669"/>
    <property type="project" value="UniProtKB-KW"/>
</dbReference>
<dbReference type="Gene3D" id="2.20.230.30">
    <property type="match status" value="3"/>
</dbReference>
<dbReference type="Gene3D" id="2.60.120.200">
    <property type="match status" value="1"/>
</dbReference>
<dbReference type="InterPro" id="IPR011098">
    <property type="entry name" value="G5_dom"/>
</dbReference>
<dbReference type="InterPro" id="IPR050436">
    <property type="entry name" value="IsdA"/>
</dbReference>
<dbReference type="InterPro" id="IPR019931">
    <property type="entry name" value="LPXTG_anchor"/>
</dbReference>
<dbReference type="InterPro" id="IPR031477">
    <property type="entry name" value="SasG_E"/>
</dbReference>
<dbReference type="InterPro" id="IPR005877">
    <property type="entry name" value="YSIRK_signal_dom"/>
</dbReference>
<dbReference type="NCBIfam" id="TIGR01167">
    <property type="entry name" value="LPXTG_anchor"/>
    <property type="match status" value="1"/>
</dbReference>
<dbReference type="NCBIfam" id="TIGR01168">
    <property type="entry name" value="YSIRK_signal"/>
    <property type="match status" value="1"/>
</dbReference>
<dbReference type="PANTHER" id="PTHR37824">
    <property type="entry name" value="IRON-REGULATED SURFACE DETERMINANT PROTEIN C"/>
    <property type="match status" value="1"/>
</dbReference>
<dbReference type="PANTHER" id="PTHR37824:SF1">
    <property type="entry name" value="IRON-REGULATED SURFACE DETERMINANT PROTEIN C"/>
    <property type="match status" value="1"/>
</dbReference>
<dbReference type="Pfam" id="PF07501">
    <property type="entry name" value="G5"/>
    <property type="match status" value="5"/>
</dbReference>
<dbReference type="Pfam" id="PF00746">
    <property type="entry name" value="Gram_pos_anchor"/>
    <property type="match status" value="1"/>
</dbReference>
<dbReference type="Pfam" id="PF18483">
    <property type="entry name" value="Lectin_L-type_dom"/>
    <property type="match status" value="1"/>
</dbReference>
<dbReference type="Pfam" id="PF17041">
    <property type="entry name" value="SasG_E"/>
    <property type="match status" value="4"/>
</dbReference>
<dbReference type="Pfam" id="PF04650">
    <property type="entry name" value="YSIRK_signal"/>
    <property type="match status" value="1"/>
</dbReference>
<dbReference type="SMART" id="SM01208">
    <property type="entry name" value="G5"/>
    <property type="match status" value="5"/>
</dbReference>
<dbReference type="PROSITE" id="PS51109">
    <property type="entry name" value="G5"/>
    <property type="match status" value="5"/>
</dbReference>
<dbReference type="PROSITE" id="PS50847">
    <property type="entry name" value="GRAM_POS_ANCHORING"/>
    <property type="match status" value="1"/>
</dbReference>
<comment type="subcellular location">
    <subcellularLocation>
        <location evidence="3">Secreted</location>
        <location evidence="3">Cell wall</location>
        <topology evidence="3">Peptidoglycan-anchor</topology>
    </subcellularLocation>
</comment>
<comment type="sequence caution" evidence="5">
    <conflict type="erroneous initiation">
        <sequence resource="EMBL-CDS" id="BAB58658"/>
    </conflict>
</comment>
<comment type="sequence caution" evidence="5">
    <conflict type="frameshift">
        <sequence resource="EMBL-CDS" id="BAB58659"/>
    </conflict>
    <text>Produces two separate ORFs.</text>
</comment>
<gene>
    <name type="ordered locus">SAV2496/SAV2497</name>
</gene>
<organism>
    <name type="scientific">Staphylococcus aureus (strain Mu50 / ATCC 700699)</name>
    <dbReference type="NCBI Taxonomy" id="158878"/>
    <lineage>
        <taxon>Bacteria</taxon>
        <taxon>Bacillati</taxon>
        <taxon>Bacillota</taxon>
        <taxon>Bacilli</taxon>
        <taxon>Bacillales</taxon>
        <taxon>Staphylococcaceae</taxon>
        <taxon>Staphylococcus</taxon>
    </lineage>
</organism>
<reference key="1">
    <citation type="journal article" date="2001" name="Lancet">
        <title>Whole genome sequencing of meticillin-resistant Staphylococcus aureus.</title>
        <authorList>
            <person name="Kuroda M."/>
            <person name="Ohta T."/>
            <person name="Uchiyama I."/>
            <person name="Baba T."/>
            <person name="Yuzawa H."/>
            <person name="Kobayashi I."/>
            <person name="Cui L."/>
            <person name="Oguchi A."/>
            <person name="Aoki K."/>
            <person name="Nagai Y."/>
            <person name="Lian J.-Q."/>
            <person name="Ito T."/>
            <person name="Kanamori M."/>
            <person name="Matsumaru H."/>
            <person name="Maruyama A."/>
            <person name="Murakami H."/>
            <person name="Hosoyama A."/>
            <person name="Mizutani-Ui Y."/>
            <person name="Takahashi N.K."/>
            <person name="Sawano T."/>
            <person name="Inoue R."/>
            <person name="Kaito C."/>
            <person name="Sekimizu K."/>
            <person name="Hirakawa H."/>
            <person name="Kuhara S."/>
            <person name="Goto S."/>
            <person name="Yabuzaki J."/>
            <person name="Kanehisa M."/>
            <person name="Yamashita A."/>
            <person name="Oshima K."/>
            <person name="Furuya K."/>
            <person name="Yoshino C."/>
            <person name="Shiba T."/>
            <person name="Hattori M."/>
            <person name="Ogasawara N."/>
            <person name="Hayashi H."/>
            <person name="Hiramatsu K."/>
        </authorList>
    </citation>
    <scope>NUCLEOTIDE SEQUENCE [LARGE SCALE GENOMIC DNA]</scope>
    <source>
        <strain>Mu50 / ATCC 700699</strain>
    </source>
</reference>
<name>PLS_STAAM</name>
<sequence length="1114" mass="122209">MRDKKGPVNKRVDFLSNKLNKYSIRKFTVGTASILIGSLMYLGTQQEAEAAENNIENPTTLKDNVQSKEVKIEEVTNKDTAPQGVEAKSEVTSNKDTIEHEASVKAEDISKKEDTPKEVANVAEVQPKSSVTHNAEAPKVRKARSVDEGSFDITRDSKNVVESTPITIQGKEHFEGYGSVDIQKNPTDLGVSEVTRFNVGNESNGLIGALQLKNKIDFSKDFNFKVRVANNHQSNTTGADGWGFLFSKGNAEEYLTNGGILGDKGLVNSGGFKIDTGYIYTSSMDKTEKQAGQGYRGYGAFVKNDSSGNSQMVGENIDKSKTNFLNYADNSTNTSDGKFHGQRLNDVILTYVASTGKMRAEYAGKTWETSITDLGLSKNQAYNFLITSSQRWGLNQGINANGWMRTDLKGSEFTFTPRSAKNNNRIRKKVEEIPFKKERKFNPDLAPGTEKVTREGQKGEKTITTPTLKNPLTGEIISKGESKEEITKDPINELTEYGPETIAPGHRDEFDPKLPTGEKEEVPGKPGIKNPETGDVVRPPVDSVTKYGPVKGDSIVEKEEIPFEKERKFNPDLAPGTEKVTREGQKGEKTTTPTLKNPLTGEIISKGESKEEITKDPINELTEYGPETIAPGHRDEFDPKLPTGEKEEVPGKPGIKNPETGDVVRPPVDSVTKYGPVKGDSIVEKEEIPFKKERKFNPDLAPGTEKVTREGQKGEKTITTPTLKNPLTGEIISKGESKEEITKDPINELTEYGPETITPGHRDEFDPKLPTGEKEEVPGKPGIKNPETGDVVRPPVDSVTKYGPVKGDSIVEKEEIPFEKERKFNPDLAPGTEKVTREGQKGEKTITTPTLKNPLTGEIISKGESKEEITKDPVNELTEFGGEKIPQGHKDIFDPNLPTDQTEKVPGKPGIKNPDTGKVIEEPVDDVIKHGPKTGTPETKTVEIPFETKREFNPKLQPGEERVKQEGQPGSKTITTPITVNPLTGEKVGEGQPTEEITKQPVDKIVEFGGEKPKDPKGPENPEKPSRPTHPSGPVNPNNPGLSKDRAKPNGPVHSMDKNDKVKKSKIAKESVANQEKKRAELPKTGLESTQKGLIFSSIIGIAGLMLLARRRKN</sequence>
<keyword id="KW-0134">Cell wall</keyword>
<keyword id="KW-0572">Peptidoglycan-anchor</keyword>
<keyword id="KW-0677">Repeat</keyword>
<keyword id="KW-0964">Secreted</keyword>
<keyword id="KW-0732">Signal</keyword>
<protein>
    <recommendedName>
        <fullName>Putative surface protein SAV2496/SAV2497</fullName>
    </recommendedName>
</protein>
<proteinExistence type="inferred from homology"/>
<feature type="signal peptide" evidence="1">
    <location>
        <begin position="1"/>
        <end position="50"/>
    </location>
</feature>
<feature type="chain" id="PRO_0000005633" description="Putative surface protein SAV2496/SAV2497">
    <location>
        <begin position="51"/>
        <end position="1085"/>
    </location>
</feature>
<feature type="propeptide" id="PRO_0000005634" description="Removed by sortase" evidence="3">
    <location>
        <begin position="1086"/>
        <end position="1114"/>
    </location>
</feature>
<feature type="domain" description="G5 1" evidence="2">
    <location>
        <begin position="419"/>
        <end position="501"/>
    </location>
</feature>
<feature type="domain" description="G5 2" evidence="2">
    <location>
        <begin position="547"/>
        <end position="628"/>
    </location>
</feature>
<feature type="domain" description="G5 3" evidence="2">
    <location>
        <begin position="674"/>
        <end position="756"/>
    </location>
</feature>
<feature type="domain" description="G5 4" evidence="2">
    <location>
        <begin position="802"/>
        <end position="884"/>
    </location>
</feature>
<feature type="domain" description="G5 5" evidence="2">
    <location>
        <begin position="930"/>
        <end position="1012"/>
    </location>
</feature>
<feature type="region of interest" description="Disordered" evidence="4">
    <location>
        <begin position="76"/>
        <end position="116"/>
    </location>
</feature>
<feature type="region of interest" description="Disordered" evidence="4">
    <location>
        <begin position="440"/>
        <end position="473"/>
    </location>
</feature>
<feature type="region of interest" description="Disordered" evidence="4">
    <location>
        <begin position="496"/>
        <end position="1088"/>
    </location>
</feature>
<feature type="short sequence motif" description="LPXTG sorting signal" evidence="3">
    <location>
        <begin position="1082"/>
        <end position="1086"/>
    </location>
</feature>
<feature type="compositionally biased region" description="Basic and acidic residues" evidence="4">
    <location>
        <begin position="96"/>
        <end position="116"/>
    </location>
</feature>
<feature type="compositionally biased region" description="Basic and acidic residues" evidence="4">
    <location>
        <begin position="451"/>
        <end position="461"/>
    </location>
</feature>
<feature type="compositionally biased region" description="Basic and acidic residues" evidence="4">
    <location>
        <begin position="505"/>
        <end position="523"/>
    </location>
</feature>
<feature type="compositionally biased region" description="Basic and acidic residues" evidence="4">
    <location>
        <begin position="554"/>
        <end position="570"/>
    </location>
</feature>
<feature type="compositionally biased region" description="Basic and acidic residues" evidence="4">
    <location>
        <begin position="579"/>
        <end position="589"/>
    </location>
</feature>
<feature type="compositionally biased region" description="Low complexity" evidence="4">
    <location>
        <begin position="590"/>
        <end position="604"/>
    </location>
</feature>
<feature type="compositionally biased region" description="Basic and acidic residues" evidence="4">
    <location>
        <begin position="605"/>
        <end position="618"/>
    </location>
</feature>
<feature type="compositionally biased region" description="Basic and acidic residues" evidence="4">
    <location>
        <begin position="632"/>
        <end position="650"/>
    </location>
</feature>
<feature type="compositionally biased region" description="Basic and acidic residues" evidence="4">
    <location>
        <begin position="681"/>
        <end position="697"/>
    </location>
</feature>
<feature type="compositionally biased region" description="Basic and acidic residues" evidence="4">
    <location>
        <begin position="706"/>
        <end position="716"/>
    </location>
</feature>
<feature type="compositionally biased region" description="Basic and acidic residues" evidence="4">
    <location>
        <begin position="733"/>
        <end position="746"/>
    </location>
</feature>
<feature type="compositionally biased region" description="Basic and acidic residues" evidence="4">
    <location>
        <begin position="760"/>
        <end position="778"/>
    </location>
</feature>
<feature type="compositionally biased region" description="Basic and acidic residues" evidence="4">
    <location>
        <begin position="809"/>
        <end position="825"/>
    </location>
</feature>
<feature type="compositionally biased region" description="Basic and acidic residues" evidence="4">
    <location>
        <begin position="834"/>
        <end position="844"/>
    </location>
</feature>
<feature type="compositionally biased region" description="Basic and acidic residues" evidence="4">
    <location>
        <begin position="861"/>
        <end position="874"/>
    </location>
</feature>
<feature type="compositionally biased region" description="Basic and acidic residues" evidence="4">
    <location>
        <begin position="918"/>
        <end position="929"/>
    </location>
</feature>
<feature type="compositionally biased region" description="Basic and acidic residues" evidence="4">
    <location>
        <begin position="946"/>
        <end position="965"/>
    </location>
</feature>
<feature type="compositionally biased region" description="Polar residues" evidence="4">
    <location>
        <begin position="968"/>
        <end position="982"/>
    </location>
</feature>
<feature type="compositionally biased region" description="Basic and acidic residues" evidence="4">
    <location>
        <begin position="996"/>
        <end position="1026"/>
    </location>
</feature>
<feature type="modified residue" description="Pentaglycyl murein peptidoglycan amidated threonine" evidence="3">
    <location>
        <position position="1085"/>
    </location>
</feature>